<organism>
    <name type="scientific">Haemophilus influenzae (strain ATCC 51907 / DSM 11121 / KW20 / Rd)</name>
    <dbReference type="NCBI Taxonomy" id="71421"/>
    <lineage>
        <taxon>Bacteria</taxon>
        <taxon>Pseudomonadati</taxon>
        <taxon>Pseudomonadota</taxon>
        <taxon>Gammaproteobacteria</taxon>
        <taxon>Pasteurellales</taxon>
        <taxon>Pasteurellaceae</taxon>
        <taxon>Haemophilus</taxon>
    </lineage>
</organism>
<feature type="chain" id="PRO_0000206797" description="Chromosome partition protein MukE">
    <location>
        <begin position="1"/>
        <end position="243"/>
    </location>
</feature>
<feature type="region of interest" description="Disordered" evidence="2">
    <location>
        <begin position="223"/>
        <end position="243"/>
    </location>
</feature>
<feature type="compositionally biased region" description="Acidic residues" evidence="2">
    <location>
        <begin position="233"/>
        <end position="243"/>
    </location>
</feature>
<dbReference type="EMBL" id="L42023">
    <property type="protein sequence ID" value="AAC23021.1"/>
    <property type="molecule type" value="Genomic_DNA"/>
</dbReference>
<dbReference type="PIR" id="C64120">
    <property type="entry name" value="C64120"/>
</dbReference>
<dbReference type="RefSeq" id="NP_439525.1">
    <property type="nucleotide sequence ID" value="NC_000907.1"/>
</dbReference>
<dbReference type="SMR" id="P45186"/>
<dbReference type="STRING" id="71421.HI_1373"/>
<dbReference type="EnsemblBacteria" id="AAC23021">
    <property type="protein sequence ID" value="AAC23021"/>
    <property type="gene ID" value="HI_1373"/>
</dbReference>
<dbReference type="KEGG" id="hin:HI_1373"/>
<dbReference type="PATRIC" id="fig|71421.8.peg.1428"/>
<dbReference type="eggNOG" id="COG3095">
    <property type="taxonomic scope" value="Bacteria"/>
</dbReference>
<dbReference type="HOGENOM" id="CLU_1146408_0_0_6"/>
<dbReference type="OrthoDB" id="6196648at2"/>
<dbReference type="PhylomeDB" id="P45186"/>
<dbReference type="BioCyc" id="HINF71421:G1GJ1-1399-MONOMER"/>
<dbReference type="Proteomes" id="UP000000579">
    <property type="component" value="Chromosome"/>
</dbReference>
<dbReference type="GO" id="GO:0005737">
    <property type="term" value="C:cytoplasm"/>
    <property type="evidence" value="ECO:0007669"/>
    <property type="project" value="UniProtKB-UniRule"/>
</dbReference>
<dbReference type="GO" id="GO:0009295">
    <property type="term" value="C:nucleoid"/>
    <property type="evidence" value="ECO:0007669"/>
    <property type="project" value="UniProtKB-SubCell"/>
</dbReference>
<dbReference type="GO" id="GO:0051301">
    <property type="term" value="P:cell division"/>
    <property type="evidence" value="ECO:0007669"/>
    <property type="project" value="UniProtKB-KW"/>
</dbReference>
<dbReference type="GO" id="GO:0030261">
    <property type="term" value="P:chromosome condensation"/>
    <property type="evidence" value="ECO:0007669"/>
    <property type="project" value="UniProtKB-KW"/>
</dbReference>
<dbReference type="GO" id="GO:0007059">
    <property type="term" value="P:chromosome segregation"/>
    <property type="evidence" value="ECO:0007669"/>
    <property type="project" value="UniProtKB-UniRule"/>
</dbReference>
<dbReference type="GO" id="GO:0006260">
    <property type="term" value="P:DNA replication"/>
    <property type="evidence" value="ECO:0007669"/>
    <property type="project" value="UniProtKB-UniRule"/>
</dbReference>
<dbReference type="Gene3D" id="1.10.10.2250">
    <property type="match status" value="1"/>
</dbReference>
<dbReference type="Gene3D" id="1.10.10.2260">
    <property type="entry name" value="MukE-like family, C-terminal domain"/>
    <property type="match status" value="1"/>
</dbReference>
<dbReference type="HAMAP" id="MF_01802">
    <property type="entry name" value="MukE"/>
    <property type="match status" value="1"/>
</dbReference>
<dbReference type="InterPro" id="IPR042037">
    <property type="entry name" value="MukE_C"/>
</dbReference>
<dbReference type="InterPro" id="IPR042038">
    <property type="entry name" value="MukE_N"/>
</dbReference>
<dbReference type="InterPro" id="IPR007385">
    <property type="entry name" value="Scp_MukE"/>
</dbReference>
<dbReference type="NCBIfam" id="NF003602">
    <property type="entry name" value="PRK05256.1"/>
    <property type="match status" value="1"/>
</dbReference>
<dbReference type="Pfam" id="PF04288">
    <property type="entry name" value="MukE"/>
    <property type="match status" value="1"/>
</dbReference>
<accession>P45186</accession>
<keyword id="KW-0131">Cell cycle</keyword>
<keyword id="KW-0132">Cell division</keyword>
<keyword id="KW-0159">Chromosome partition</keyword>
<keyword id="KW-0963">Cytoplasm</keyword>
<keyword id="KW-0226">DNA condensation</keyword>
<keyword id="KW-1185">Reference proteome</keyword>
<comment type="function">
    <text evidence="1">Involved in chromosome condensation, segregation and cell cycle progression. May participate in facilitating chromosome segregation by condensation DNA from both sides of a centrally located replisome during cell division. Probably acts via its interaction with MukB and MukF.</text>
</comment>
<comment type="subunit">
    <text evidence="1">Interacts, and probably forms a ternary complex, with MukF and MukB. The complex formation is stimulated by calcium or magnesium.</text>
</comment>
<comment type="subcellular location">
    <subcellularLocation>
        <location evidence="1">Cytoplasm</location>
        <location evidence="1">Nucleoid</location>
    </subcellularLocation>
    <text evidence="1">Restricted to the nucleoid region.</text>
</comment>
<comment type="similarity">
    <text evidence="1">Belongs to the MukE family.</text>
</comment>
<name>MUKE_HAEIN</name>
<sequence length="243" mass="27229">MTDIQDVISPKLAVAIANPIFPAVDSLLRSGRHISTEHLDNHAFLMDFQNELDGFYRRYNVELIRAPEGFFYLRPKATTLIARSVLSELEMLVGKVLCYLYLSPERLAQQGIFSTQEVYDELLNLADEGKLLKAVNQRSSGSDLDKQKLAEKVRAAIGRLRRLGMIQTVGEQNSGKFTISESVFRFGAEVRSGDDPLESQARLIRDGEAATPDSLALEKQAQLMENDTKSADEIDEEFDGEQE</sequence>
<gene>
    <name evidence="1" type="primary">mukE</name>
    <name type="synonym">kicA</name>
    <name type="ordered locus">HI_1373</name>
</gene>
<evidence type="ECO:0000255" key="1">
    <source>
        <dbReference type="HAMAP-Rule" id="MF_01802"/>
    </source>
</evidence>
<evidence type="ECO:0000256" key="2">
    <source>
        <dbReference type="SAM" id="MobiDB-lite"/>
    </source>
</evidence>
<reference key="1">
    <citation type="journal article" date="1995" name="Science">
        <title>Whole-genome random sequencing and assembly of Haemophilus influenzae Rd.</title>
        <authorList>
            <person name="Fleischmann R.D."/>
            <person name="Adams M.D."/>
            <person name="White O."/>
            <person name="Clayton R.A."/>
            <person name="Kirkness E.F."/>
            <person name="Kerlavage A.R."/>
            <person name="Bult C.J."/>
            <person name="Tomb J.-F."/>
            <person name="Dougherty B.A."/>
            <person name="Merrick J.M."/>
            <person name="McKenney K."/>
            <person name="Sutton G.G."/>
            <person name="FitzHugh W."/>
            <person name="Fields C.A."/>
            <person name="Gocayne J.D."/>
            <person name="Scott J.D."/>
            <person name="Shirley R."/>
            <person name="Liu L.-I."/>
            <person name="Glodek A."/>
            <person name="Kelley J.M."/>
            <person name="Weidman J.F."/>
            <person name="Phillips C.A."/>
            <person name="Spriggs T."/>
            <person name="Hedblom E."/>
            <person name="Cotton M.D."/>
            <person name="Utterback T.R."/>
            <person name="Hanna M.C."/>
            <person name="Nguyen D.T."/>
            <person name="Saudek D.M."/>
            <person name="Brandon R.C."/>
            <person name="Fine L.D."/>
            <person name="Fritchman J.L."/>
            <person name="Fuhrmann J.L."/>
            <person name="Geoghagen N.S.M."/>
            <person name="Gnehm C.L."/>
            <person name="McDonald L.A."/>
            <person name="Small K.V."/>
            <person name="Fraser C.M."/>
            <person name="Smith H.O."/>
            <person name="Venter J.C."/>
        </authorList>
    </citation>
    <scope>NUCLEOTIDE SEQUENCE [LARGE SCALE GENOMIC DNA]</scope>
    <source>
        <strain>ATCC 51907 / DSM 11121 / KW20 / Rd</strain>
    </source>
</reference>
<proteinExistence type="inferred from homology"/>
<protein>
    <recommendedName>
        <fullName evidence="1">Chromosome partition protein MukE</fullName>
    </recommendedName>
</protein>